<protein>
    <recommendedName>
        <fullName>Probable translocation protein y4yM</fullName>
    </recommendedName>
</protein>
<keyword id="KW-1003">Cell membrane</keyword>
<keyword id="KW-0472">Membrane</keyword>
<keyword id="KW-0614">Plasmid</keyword>
<keyword id="KW-1185">Reference proteome</keyword>
<keyword id="KW-0812">Transmembrane</keyword>
<keyword id="KW-1133">Transmembrane helix</keyword>
<keyword id="KW-0813">Transport</keyword>
<evidence type="ECO:0000255" key="1"/>
<evidence type="ECO:0000305" key="2"/>
<proteinExistence type="inferred from homology"/>
<geneLocation type="plasmid">
    <name>sym pNGR234a</name>
</geneLocation>
<name>Y4YM_SINFN</name>
<dbReference type="EMBL" id="U00090">
    <property type="protein sequence ID" value="AAB91952.1"/>
    <property type="molecule type" value="Genomic_DNA"/>
</dbReference>
<dbReference type="RefSeq" id="NP_444165.1">
    <property type="nucleotide sequence ID" value="NC_000914.2"/>
</dbReference>
<dbReference type="RefSeq" id="WP_010875101.1">
    <property type="nucleotide sequence ID" value="NC_000914.2"/>
</dbReference>
<dbReference type="SMR" id="P55721"/>
<dbReference type="KEGG" id="rhi:NGR_a00600"/>
<dbReference type="PATRIC" id="fig|394.7.peg.58"/>
<dbReference type="eggNOG" id="COG4794">
    <property type="taxonomic scope" value="Bacteria"/>
</dbReference>
<dbReference type="HOGENOM" id="CLU_164516_1_1_5"/>
<dbReference type="OrthoDB" id="9806440at2"/>
<dbReference type="Proteomes" id="UP000001054">
    <property type="component" value="Plasmid pNGR234a"/>
</dbReference>
<dbReference type="GO" id="GO:0005886">
    <property type="term" value="C:plasma membrane"/>
    <property type="evidence" value="ECO:0007669"/>
    <property type="project" value="UniProtKB-SubCell"/>
</dbReference>
<dbReference type="GO" id="GO:0009306">
    <property type="term" value="P:protein secretion"/>
    <property type="evidence" value="ECO:0007669"/>
    <property type="project" value="InterPro"/>
</dbReference>
<dbReference type="InterPro" id="IPR002191">
    <property type="entry name" value="Bac_export_3"/>
</dbReference>
<dbReference type="InterPro" id="IPR009825">
    <property type="entry name" value="ECF_substrate-spec-like"/>
</dbReference>
<dbReference type="PANTHER" id="PTHR34040">
    <property type="entry name" value="FLAGELLAR BIOSYNTHETIC PROTEIN FLIQ"/>
    <property type="match status" value="1"/>
</dbReference>
<dbReference type="PANTHER" id="PTHR34040:SF7">
    <property type="entry name" value="SURFACE PRESENTATION OF ANTIGENS PROTEIN SPAQ"/>
    <property type="match status" value="1"/>
</dbReference>
<dbReference type="Pfam" id="PF01313">
    <property type="entry name" value="Bac_export_3"/>
    <property type="match status" value="1"/>
</dbReference>
<dbReference type="Pfam" id="PF07155">
    <property type="entry name" value="ECF-ribofla_trS"/>
    <property type="match status" value="1"/>
</dbReference>
<dbReference type="PRINTS" id="PR00952">
    <property type="entry name" value="TYPE3IMQPROT"/>
</dbReference>
<feature type="chain" id="PRO_0000129115" description="Probable translocation protein y4yM">
    <location>
        <begin position="1"/>
        <end position="91"/>
    </location>
</feature>
<feature type="transmembrane region" description="Helical" evidence="1">
    <location>
        <begin position="15"/>
        <end position="35"/>
    </location>
</feature>
<feature type="transmembrane region" description="Helical" evidence="1">
    <location>
        <begin position="55"/>
        <end position="75"/>
    </location>
</feature>
<sequence>MTGSSIVSLMSQSLVVFMIWILPPLIASVIVGLTIGIIQAATQIQDESLPLTVKLLVVVAVIGLFAPVLSAPLIELADQIFTEFPAMTLGY</sequence>
<reference key="1">
    <citation type="journal article" date="1997" name="Nature">
        <title>Molecular basis of symbiosis between Rhizobium and legumes.</title>
        <authorList>
            <person name="Freiberg C.A."/>
            <person name="Fellay R."/>
            <person name="Bairoch A."/>
            <person name="Broughton W.J."/>
            <person name="Rosenthal A."/>
            <person name="Perret X."/>
        </authorList>
    </citation>
    <scope>NUCLEOTIDE SEQUENCE [LARGE SCALE GENOMIC DNA]</scope>
    <source>
        <strain>NBRC 101917 / NGR234</strain>
    </source>
</reference>
<reference key="2">
    <citation type="journal article" date="2009" name="Appl. Environ. Microbiol.">
        <title>Rhizobium sp. strain NGR234 possesses a remarkable number of secretion systems.</title>
        <authorList>
            <person name="Schmeisser C."/>
            <person name="Liesegang H."/>
            <person name="Krysciak D."/>
            <person name="Bakkou N."/>
            <person name="Le Quere A."/>
            <person name="Wollherr A."/>
            <person name="Heinemeyer I."/>
            <person name="Morgenstern B."/>
            <person name="Pommerening-Roeser A."/>
            <person name="Flores M."/>
            <person name="Palacios R."/>
            <person name="Brenner S."/>
            <person name="Gottschalk G."/>
            <person name="Schmitz R.A."/>
            <person name="Broughton W.J."/>
            <person name="Perret X."/>
            <person name="Strittmatter A.W."/>
            <person name="Streit W.R."/>
        </authorList>
    </citation>
    <scope>NUCLEOTIDE SEQUENCE [LARGE SCALE GENOMIC DNA]</scope>
    <source>
        <strain>NBRC 101917 / NGR234</strain>
    </source>
</reference>
<gene>
    <name type="ordered locus">NGR_a00600</name>
    <name type="ORF">y4yM</name>
</gene>
<organism>
    <name type="scientific">Sinorhizobium fredii (strain NBRC 101917 / NGR234)</name>
    <dbReference type="NCBI Taxonomy" id="394"/>
    <lineage>
        <taxon>Bacteria</taxon>
        <taxon>Pseudomonadati</taxon>
        <taxon>Pseudomonadota</taxon>
        <taxon>Alphaproteobacteria</taxon>
        <taxon>Hyphomicrobiales</taxon>
        <taxon>Rhizobiaceae</taxon>
        <taxon>Sinorhizobium/Ensifer group</taxon>
        <taxon>Sinorhizobium</taxon>
    </lineage>
</organism>
<accession>P55721</accession>
<comment type="function">
    <text>Could be involved in the secretion of an unknown factor.</text>
</comment>
<comment type="subcellular location">
    <subcellularLocation>
        <location evidence="2">Cell membrane</location>
        <topology evidence="2">Multi-pass membrane protein</topology>
    </subcellularLocation>
</comment>
<comment type="similarity">
    <text evidence="2">Belongs to the FliQ/MopD/SpaQ family.</text>
</comment>